<accession>F6S215</accession>
<dbReference type="EMBL" id="AAMC01065270">
    <property type="status" value="NOT_ANNOTATED_CDS"/>
    <property type="molecule type" value="Genomic_DNA"/>
</dbReference>
<dbReference type="SMR" id="F6S215"/>
<dbReference type="FunCoup" id="F6S215">
    <property type="interactions" value="170"/>
</dbReference>
<dbReference type="STRING" id="8364.ENSXETP00000035910"/>
<dbReference type="PaxDb" id="8364-ENSXETP00000058924"/>
<dbReference type="eggNOG" id="ENOG502QVTX">
    <property type="taxonomic scope" value="Eukaryota"/>
</dbReference>
<dbReference type="InParanoid" id="F6S215"/>
<dbReference type="TreeFam" id="TF332158"/>
<dbReference type="Proteomes" id="UP000008143">
    <property type="component" value="Unplaced"/>
</dbReference>
<dbReference type="GO" id="GO:0030119">
    <property type="term" value="C:AP-type membrane coat adaptor complex"/>
    <property type="evidence" value="ECO:0000250"/>
    <property type="project" value="UniProtKB"/>
</dbReference>
<dbReference type="GO" id="GO:0016197">
    <property type="term" value="P:endosomal transport"/>
    <property type="evidence" value="ECO:0000250"/>
    <property type="project" value="UniProtKB"/>
</dbReference>
<dbReference type="GO" id="GO:0015031">
    <property type="term" value="P:protein transport"/>
    <property type="evidence" value="ECO:0007669"/>
    <property type="project" value="UniProtKB-KW"/>
</dbReference>
<dbReference type="Gene3D" id="1.25.10.10">
    <property type="entry name" value="Leucine-rich Repeat Variant"/>
    <property type="match status" value="1"/>
</dbReference>
<dbReference type="InterPro" id="IPR038741">
    <property type="entry name" value="AP5B1"/>
</dbReference>
<dbReference type="InterPro" id="IPR048980">
    <property type="entry name" value="AP5B1_barrel"/>
</dbReference>
<dbReference type="InterPro" id="IPR048981">
    <property type="entry name" value="AP5B1_C"/>
</dbReference>
<dbReference type="InterPro" id="IPR048979">
    <property type="entry name" value="AP5B1_middle"/>
</dbReference>
<dbReference type="InterPro" id="IPR048978">
    <property type="entry name" value="AP5B1_N"/>
</dbReference>
<dbReference type="InterPro" id="IPR011989">
    <property type="entry name" value="ARM-like"/>
</dbReference>
<dbReference type="PANTHER" id="PTHR34033">
    <property type="entry name" value="AP-5 COMPLEX SUBUNIT BETA-1"/>
    <property type="match status" value="1"/>
</dbReference>
<dbReference type="PANTHER" id="PTHR34033:SF1">
    <property type="entry name" value="AP-5 COMPLEX SUBUNIT BETA-1"/>
    <property type="match status" value="1"/>
</dbReference>
<dbReference type="Pfam" id="PF21589">
    <property type="entry name" value="AP5B1_barrel"/>
    <property type="match status" value="1"/>
</dbReference>
<dbReference type="Pfam" id="PF21590">
    <property type="entry name" value="AP5B1_C"/>
    <property type="match status" value="1"/>
</dbReference>
<dbReference type="Pfam" id="PF21588">
    <property type="entry name" value="AP5B1_middle"/>
    <property type="match status" value="1"/>
</dbReference>
<dbReference type="Pfam" id="PF21587">
    <property type="entry name" value="AP5B1_N"/>
    <property type="match status" value="1"/>
</dbReference>
<name>AP5B1_XENTR</name>
<protein>
    <recommendedName>
        <fullName>AP-5 complex subunit beta-1</fullName>
    </recommendedName>
    <alternativeName>
        <fullName>Adaptor-related protein complex 5 beta subunit</fullName>
        <shortName>Beta5</shortName>
    </alternativeName>
</protein>
<gene>
    <name type="primary">ap5b1</name>
</gene>
<organism>
    <name type="scientific">Xenopus tropicalis</name>
    <name type="common">Western clawed frog</name>
    <name type="synonym">Silurana tropicalis</name>
    <dbReference type="NCBI Taxonomy" id="8364"/>
    <lineage>
        <taxon>Eukaryota</taxon>
        <taxon>Metazoa</taxon>
        <taxon>Chordata</taxon>
        <taxon>Craniata</taxon>
        <taxon>Vertebrata</taxon>
        <taxon>Euteleostomi</taxon>
        <taxon>Amphibia</taxon>
        <taxon>Batrachia</taxon>
        <taxon>Anura</taxon>
        <taxon>Pipoidea</taxon>
        <taxon>Pipidae</taxon>
        <taxon>Xenopodinae</taxon>
        <taxon>Xenopus</taxon>
        <taxon>Silurana</taxon>
    </lineage>
</organism>
<reference key="1">
    <citation type="journal article" date="2010" name="Science">
        <title>The genome of the Western clawed frog Xenopus tropicalis.</title>
        <authorList>
            <person name="Hellsten U."/>
            <person name="Harland R.M."/>
            <person name="Gilchrist M.J."/>
            <person name="Hendrix D."/>
            <person name="Jurka J."/>
            <person name="Kapitonov V."/>
            <person name="Ovcharenko I."/>
            <person name="Putnam N.H."/>
            <person name="Shu S."/>
            <person name="Taher L."/>
            <person name="Blitz I.L."/>
            <person name="Blumberg B."/>
            <person name="Dichmann D.S."/>
            <person name="Dubchak I."/>
            <person name="Amaya E."/>
            <person name="Detter J.C."/>
            <person name="Fletcher R."/>
            <person name="Gerhard D.S."/>
            <person name="Goodstein D."/>
            <person name="Graves T."/>
            <person name="Grigoriev I.V."/>
            <person name="Grimwood J."/>
            <person name="Kawashima T."/>
            <person name="Lindquist E."/>
            <person name="Lucas S.M."/>
            <person name="Mead P.E."/>
            <person name="Mitros T."/>
            <person name="Ogino H."/>
            <person name="Ohta Y."/>
            <person name="Poliakov A.V."/>
            <person name="Pollet N."/>
            <person name="Robert J."/>
            <person name="Salamov A."/>
            <person name="Sater A.K."/>
            <person name="Schmutz J."/>
            <person name="Terry A."/>
            <person name="Vize P.D."/>
            <person name="Warren W.C."/>
            <person name="Wells D."/>
            <person name="Wills A."/>
            <person name="Wilson R.K."/>
            <person name="Zimmerman L.B."/>
            <person name="Zorn A.M."/>
            <person name="Grainger R."/>
            <person name="Grammer T."/>
            <person name="Khokha M.K."/>
            <person name="Richardson P.M."/>
            <person name="Rokhsar D.S."/>
        </authorList>
    </citation>
    <scope>NUCLEOTIDE SEQUENCE [LARGE SCALE GENOMIC DNA]</scope>
</reference>
<sequence>MAERNSASWNRKVASFCSEPKTFLCDSSVDGFLGELLKDLQSEAIHGQTKILMMDLLLEFPEFLCPDQKTVEMTAETLMNILKKMPSSERSMTLRCHLLLAIETVLITCESFNQNSKMAQDFASLLMHIISDVNDKKQGVANRPLRTTACECLRELESCYPGFLSQRMEKLYLMQQQEVTAAHQSYTLLYTVVLKNAIRFLAQKEGPSNGALKNALLSNEDFFWSATENMVELQPSSNEQLLLLPSNSETKDLKSILALLLEDSYLLTPVCQNTLFWQIVQVVAMARTISPVIFKSQLVRLFSTMDLSCFHSILQMKAVFTDSLFTGEDEHFLIQRLVGMTQHPLLSTPVKLFYLDCLLHFPENRPLTSNSEENLPVLLTVQMTSSLFPNVFNDHSTMLCRQNVLSMVYLENEGSYSEKGIAFLFEHVMSLYSMVHKNGNREITATFFRAVHLFVQYFNFCEKHMENLTEKLLKLYMSNSSLAPNFINLINQTQILLEFHVWPVTLSKALQKEIVNLPTDKWTMKNLGWHLKILSRVAQENSISQSSTALFLRRVVFCSDLCSKGDWRTGNALLSVCKHVLQHQKLSAIFVHLADLLQYLMHRFEDIDVQDRARLYYVLLTNVSSDKLGKILTMSPARGQTKSRSLSSIMTENENFSTMLTIRNAEKTLLCLQPVLEGIKAFTCISDSPSLYCIVLQFENTDCRFESISDINVPCLFVDRKPPVVTINLVPKEPYPTIFSVSATYSTQDGITYQTKLDPLYITFREMFIPLPLPALWPLESRFDLFGKLWSAFKPDEQNQFEESIFCYEMSNNSLHDIVLDNFSKFAVSCNGGEYKIAVFLPPQFHILMHIKSQDDTACFSVRTDNWNLLPYLNSHLLDITLQ</sequence>
<comment type="function">
    <text evidence="1">As part of AP-5, a probable fifth adaptor protein complex, it may be involved in endosomal transport.</text>
</comment>
<comment type="subunit">
    <text evidence="1">Probably part of the adaptor protein complex 5 (AP-5).</text>
</comment>
<proteinExistence type="inferred from homology"/>
<evidence type="ECO:0000250" key="1"/>
<keyword id="KW-0653">Protein transport</keyword>
<keyword id="KW-1185">Reference proteome</keyword>
<keyword id="KW-0813">Transport</keyword>
<feature type="chain" id="PRO_0000417048" description="AP-5 complex subunit beta-1">
    <location>
        <begin position="1"/>
        <end position="883"/>
    </location>
</feature>